<proteinExistence type="inferred from homology"/>
<sequence length="1194" mass="134048">MAIRTGFCNPFLTQASGIKYNPRTGRGSNREFLHSYKTTMSSFQFLAPKCLDEDVPMEERKGVHVGTLSRPPKVYCNGKEVPILDFRCSSPWPRRVNIWGEIDFRGDKFDPRFNTFHVYDIVETTEAASNGDVSRFATATRPLGTVITLLGMSRCGKRVAVHVYGICQYFYINKAEVDTACGIRSGSELSVLLAECLRSSMITQNDATLNGDKNAFHGTSFKSASPESFRVEVIERTDVYYYDTQPCAFYRVYSPSSKFTNYLCDNFHPELKKYEGRVDATTRFLMDNPGFVSFGWYQLKPGVDGERVRVRPASRQLTLSDVEIDCMSDNLQAIPNDDSWPDYKLLCFDIECKSGGSNELAFPDATHLEDLVIQISCLLYSIPRQSLEHILLFSLGSCDLPQRYVQEMKDAGLPEPTVLEFDSEFELLIAFMTLVKQYAPEFATGYNIVNFDWAFIMEKLNSIYSLKLDGYGSINRGGLFKIWDVGKSGFQRRSKVKINGLISLDMYAIATEKLKLSSYKLDSVAREALNESKRDLPYKDIPGYYASGPNTRGIIGEYCIQDSALVGKLFFKYLPHLELSAVARLARITLTKAIYDGQQVRIYTCLLGLASSRGFILPDGGYPATFEYKDVIPDVGDVEEEMDEDESVSPTGTSSGRNVGYKGARVFDPDTGFYIDPVVVLDFASLYPSIIQAHNLCFTTLTLNFETVKRLNPSDYATFTVGGKRLFFVRSNVRESLLGVLLKDWLAMRKAIRARIPGSSSDEAVLLDKQQAAIKVVCNSVYGFTGVAQGFLPCLYVAATVTTIGRQMLLSTRDYIHNNWAAFERFITAFPDIESSVLSQKAYEVKVIYGDTDSVFIRFKGVSVEGIAKIGEKMAHIISTALFCPPIKLECEKTFIKLLLITKKKYIGVIYGGKVLMKGVDLVRKNNCQFINDYARKLVELLLYDDTVSRAAAEASCVSIAEWNRRAMPSGMAGFGRIIADAHRQITSPKLDINKFVMTAELSRPPSAYINRRLAHLTVYYKLVMRQGQIPNVRERIPYVIVAPTDEVEADAKSVALLRGDPLQNTAGKRCGEAKRKLIISDLAEDPIHVTSHGLSLNIDYYFSHLIGTASVTFKALFGNDTKLTERLLKRFIPETRVVNVKMLNRLQAAGFVCIHAPCWDNKMNTEAEITEEEQSHQIMRRVFCIPKAILHQS</sequence>
<feature type="chain" id="PRO_0000046525" description="DNA polymerase catalytic subunit">
    <location>
        <begin position="1"/>
        <end position="1194"/>
    </location>
</feature>
<protein>
    <recommendedName>
        <fullName>DNA polymerase catalytic subunit</fullName>
        <ecNumber>2.7.7.7</ecNumber>
        <ecNumber>3.1.26.4</ecNumber>
    </recommendedName>
</protein>
<dbReference type="EC" id="2.7.7.7"/>
<dbReference type="EC" id="3.1.26.4"/>
<dbReference type="EMBL" id="X04370">
    <property type="protein sequence ID" value="CAA27911.1"/>
    <property type="molecule type" value="Genomic_DNA"/>
</dbReference>
<dbReference type="PIR" id="B27214">
    <property type="entry name" value="DJBE28"/>
</dbReference>
<dbReference type="SMR" id="P09252"/>
<dbReference type="BindingDB" id="P09252"/>
<dbReference type="ChEMBL" id="CHEMBL4859"/>
<dbReference type="DrugBank" id="DB00787">
    <property type="generic name" value="Acyclovir"/>
</dbReference>
<dbReference type="DrugCentral" id="P09252"/>
<dbReference type="Proteomes" id="UP000002602">
    <property type="component" value="Genome"/>
</dbReference>
<dbReference type="GO" id="GO:0042025">
    <property type="term" value="C:host cell nucleus"/>
    <property type="evidence" value="ECO:0007669"/>
    <property type="project" value="UniProtKB-SubCell"/>
</dbReference>
<dbReference type="GO" id="GO:0003677">
    <property type="term" value="F:DNA binding"/>
    <property type="evidence" value="ECO:0007669"/>
    <property type="project" value="UniProtKB-KW"/>
</dbReference>
<dbReference type="GO" id="GO:0003887">
    <property type="term" value="F:DNA-directed DNA polymerase activity"/>
    <property type="evidence" value="ECO:0007669"/>
    <property type="project" value="UniProtKB-KW"/>
</dbReference>
<dbReference type="GO" id="GO:0000166">
    <property type="term" value="F:nucleotide binding"/>
    <property type="evidence" value="ECO:0007669"/>
    <property type="project" value="InterPro"/>
</dbReference>
<dbReference type="GO" id="GO:0004523">
    <property type="term" value="F:RNA-DNA hybrid ribonuclease activity"/>
    <property type="evidence" value="ECO:0007669"/>
    <property type="project" value="UniProtKB-EC"/>
</dbReference>
<dbReference type="GO" id="GO:0006261">
    <property type="term" value="P:DNA-templated DNA replication"/>
    <property type="evidence" value="ECO:0007669"/>
    <property type="project" value="TreeGrafter"/>
</dbReference>
<dbReference type="GO" id="GO:0039693">
    <property type="term" value="P:viral DNA genome replication"/>
    <property type="evidence" value="ECO:0007669"/>
    <property type="project" value="UniProtKB-KW"/>
</dbReference>
<dbReference type="FunFam" id="1.10.132.60:FF:000011">
    <property type="entry name" value="DNA polymerase catalytic subunit"/>
    <property type="match status" value="1"/>
</dbReference>
<dbReference type="Gene3D" id="1.10.132.60">
    <property type="entry name" value="DNA polymerase family B, C-terminal domain"/>
    <property type="match status" value="1"/>
</dbReference>
<dbReference type="Gene3D" id="3.30.342.10">
    <property type="entry name" value="DNA Polymerase, chain B, domain 1"/>
    <property type="match status" value="1"/>
</dbReference>
<dbReference type="Gene3D" id="1.10.287.690">
    <property type="entry name" value="Helix hairpin bin"/>
    <property type="match status" value="1"/>
</dbReference>
<dbReference type="Gene3D" id="3.90.1600.10">
    <property type="entry name" value="Palm domain of DNA polymerase"/>
    <property type="match status" value="1"/>
</dbReference>
<dbReference type="Gene3D" id="3.30.420.10">
    <property type="entry name" value="Ribonuclease H-like superfamily/Ribonuclease H"/>
    <property type="match status" value="1"/>
</dbReference>
<dbReference type="InterPro" id="IPR006172">
    <property type="entry name" value="DNA-dir_DNA_pol_B"/>
</dbReference>
<dbReference type="InterPro" id="IPR017964">
    <property type="entry name" value="DNA-dir_DNA_pol_B_CS"/>
</dbReference>
<dbReference type="InterPro" id="IPR006133">
    <property type="entry name" value="DNA-dir_DNA_pol_B_exonuc"/>
</dbReference>
<dbReference type="InterPro" id="IPR006134">
    <property type="entry name" value="DNA-dir_DNA_pol_B_multi_dom"/>
</dbReference>
<dbReference type="InterPro" id="IPR043502">
    <property type="entry name" value="DNA/RNA_pol_sf"/>
</dbReference>
<dbReference type="InterPro" id="IPR042087">
    <property type="entry name" value="DNA_pol_B_thumb"/>
</dbReference>
<dbReference type="InterPro" id="IPR023211">
    <property type="entry name" value="DNA_pol_palm_dom_sf"/>
</dbReference>
<dbReference type="InterPro" id="IPR050240">
    <property type="entry name" value="DNA_pol_type-B"/>
</dbReference>
<dbReference type="InterPro" id="IPR012337">
    <property type="entry name" value="RNaseH-like_sf"/>
</dbReference>
<dbReference type="InterPro" id="IPR036397">
    <property type="entry name" value="RNaseH_sf"/>
</dbReference>
<dbReference type="PANTHER" id="PTHR10322">
    <property type="entry name" value="DNA POLYMERASE CATALYTIC SUBUNIT"/>
    <property type="match status" value="1"/>
</dbReference>
<dbReference type="PANTHER" id="PTHR10322:SF23">
    <property type="entry name" value="DNA POLYMERASE DELTA CATALYTIC SUBUNIT"/>
    <property type="match status" value="1"/>
</dbReference>
<dbReference type="Pfam" id="PF00136">
    <property type="entry name" value="DNA_pol_B"/>
    <property type="match status" value="1"/>
</dbReference>
<dbReference type="Pfam" id="PF03104">
    <property type="entry name" value="DNA_pol_B_exo1"/>
    <property type="match status" value="1"/>
</dbReference>
<dbReference type="PRINTS" id="PR00106">
    <property type="entry name" value="DNAPOLB"/>
</dbReference>
<dbReference type="SMART" id="SM00486">
    <property type="entry name" value="POLBc"/>
    <property type="match status" value="1"/>
</dbReference>
<dbReference type="SUPFAM" id="SSF56672">
    <property type="entry name" value="DNA/RNA polymerases"/>
    <property type="match status" value="1"/>
</dbReference>
<dbReference type="SUPFAM" id="SSF53098">
    <property type="entry name" value="Ribonuclease H-like"/>
    <property type="match status" value="1"/>
</dbReference>
<dbReference type="PROSITE" id="PS00116">
    <property type="entry name" value="DNA_POLYMERASE_B"/>
    <property type="match status" value="1"/>
</dbReference>
<keyword id="KW-0235">DNA replication</keyword>
<keyword id="KW-0238">DNA-binding</keyword>
<keyword id="KW-0239">DNA-directed DNA polymerase</keyword>
<keyword id="KW-0255">Endonuclease</keyword>
<keyword id="KW-1048">Host nucleus</keyword>
<keyword id="KW-0378">Hydrolase</keyword>
<keyword id="KW-0511">Multifunctional enzyme</keyword>
<keyword id="KW-0540">Nuclease</keyword>
<keyword id="KW-0548">Nucleotidyltransferase</keyword>
<keyword id="KW-1185">Reference proteome</keyword>
<keyword id="KW-0808">Transferase</keyword>
<keyword id="KW-1194">Viral DNA replication</keyword>
<evidence type="ECO:0000250" key="1"/>
<evidence type="ECO:0000305" key="2"/>
<comment type="function">
    <text evidence="1">Replicates viral genomic DNA. The replication complex is composed of six viral proteins: the DNA polymerase, processivity factor, primase, primase-associated factor, helicase, and ssDNA-binding protein. Additionally, the polymerase contains an intrinsic ribonuclease H (RNase H) activity that specifically degrades RNA/DNA heteroduplexes or duplex DNA substrates in the 5' to 3' direction. Therefore, it can catalyze the excision of the RNA primers that initiate the synthesis of Okazaki fragments at a replication fork during viral DNA replication (By similarity).</text>
</comment>
<comment type="catalytic activity">
    <reaction>
        <text>DNA(n) + a 2'-deoxyribonucleoside 5'-triphosphate = DNA(n+1) + diphosphate</text>
        <dbReference type="Rhea" id="RHEA:22508"/>
        <dbReference type="Rhea" id="RHEA-COMP:17339"/>
        <dbReference type="Rhea" id="RHEA-COMP:17340"/>
        <dbReference type="ChEBI" id="CHEBI:33019"/>
        <dbReference type="ChEBI" id="CHEBI:61560"/>
        <dbReference type="ChEBI" id="CHEBI:173112"/>
        <dbReference type="EC" id="2.7.7.7"/>
    </reaction>
</comment>
<comment type="catalytic activity">
    <reaction>
        <text>Endonucleolytic cleavage to 5'-phosphomonoester.</text>
        <dbReference type="EC" id="3.1.26.4"/>
    </reaction>
</comment>
<comment type="subunit">
    <text evidence="1">Forms a complex with the ssDNA-binding protein, the DNA polymerase processivity factor, and the alkaline exonuclease. Interacts with the helicase-primase complex composed of the primase, the helicase and the primase-associated factor; this interaction may coordinate leading and lagging strand DNA synthesis at the replication fork (By similarity).</text>
</comment>
<comment type="subcellular location">
    <subcellularLocation>
        <location evidence="1">Host nucleus</location>
    </subcellularLocation>
    <text evidence="1">the protein is present at discrete sites in nuclei, called replication compartments where viral DNA replication occurs.</text>
</comment>
<comment type="similarity">
    <text evidence="2">Belongs to the DNA polymerase type-B family.</text>
</comment>
<gene>
    <name type="ORF">ORF28</name>
</gene>
<name>DPOL_VZVD</name>
<organism>
    <name type="scientific">Varicella-zoster virus (strain Dumas)</name>
    <name type="common">HHV-3</name>
    <name type="synonym">Human herpesvirus 3</name>
    <dbReference type="NCBI Taxonomy" id="10338"/>
    <lineage>
        <taxon>Viruses</taxon>
        <taxon>Duplodnaviria</taxon>
        <taxon>Heunggongvirae</taxon>
        <taxon>Peploviricota</taxon>
        <taxon>Herviviricetes</taxon>
        <taxon>Herpesvirales</taxon>
        <taxon>Orthoherpesviridae</taxon>
        <taxon>Alphaherpesvirinae</taxon>
        <taxon>Varicellovirus</taxon>
        <taxon>Varicellovirus humanalpha3</taxon>
        <taxon>Human herpesvirus 3</taxon>
    </lineage>
</organism>
<reference key="1">
    <citation type="journal article" date="1986" name="J. Gen. Virol.">
        <title>The complete DNA sequence of varicella-zoster virus.</title>
        <authorList>
            <person name="Davison A.J."/>
            <person name="Scott J.E."/>
        </authorList>
    </citation>
    <scope>NUCLEOTIDE SEQUENCE [LARGE SCALE GENOMIC DNA]</scope>
</reference>
<organismHost>
    <name type="scientific">Homo sapiens</name>
    <name type="common">Human</name>
    <dbReference type="NCBI Taxonomy" id="9606"/>
</organismHost>
<accession>P09252</accession>